<keyword id="KW-0010">Activator</keyword>
<keyword id="KW-0369">Histidine metabolism</keyword>
<keyword id="KW-0694">RNA-binding</keyword>
<keyword id="KW-0804">Transcription</keyword>
<keyword id="KW-0805">Transcription regulation</keyword>
<proteinExistence type="inferred from homology"/>
<accession>B7HKJ2</accession>
<protein>
    <recommendedName>
        <fullName evidence="1">Hut operon positive regulatory protein</fullName>
    </recommendedName>
</protein>
<sequence length="146" mass="15822">MLLQGTHRIGRMAMLLALADENESPVLSIPKGWKYCTGKVGSMNSQKVVAAMETAAKSNQVIETDVYRETHALYHAIMEALYGVTRGQIQLADVLRTVGLRFAIVRGTPYDGKKEGEWVAVALYGTIGAPVKGSEHEAIGLGINHI</sequence>
<dbReference type="EMBL" id="CP001177">
    <property type="protein sequence ID" value="ACJ80241.1"/>
    <property type="molecule type" value="Genomic_DNA"/>
</dbReference>
<dbReference type="SMR" id="B7HKJ2"/>
<dbReference type="KEGG" id="bcr:BCAH187_A3686"/>
<dbReference type="HOGENOM" id="CLU_148478_0_0_9"/>
<dbReference type="Proteomes" id="UP000002214">
    <property type="component" value="Chromosome"/>
</dbReference>
<dbReference type="GO" id="GO:0003729">
    <property type="term" value="F:mRNA binding"/>
    <property type="evidence" value="ECO:0007669"/>
    <property type="project" value="UniProtKB-UniRule"/>
</dbReference>
<dbReference type="GO" id="GO:0006547">
    <property type="term" value="P:L-histidine metabolic process"/>
    <property type="evidence" value="ECO:0007669"/>
    <property type="project" value="UniProtKB-UniRule"/>
</dbReference>
<dbReference type="GO" id="GO:0010628">
    <property type="term" value="P:positive regulation of gene expression"/>
    <property type="evidence" value="ECO:0007669"/>
    <property type="project" value="UniProtKB-UniRule"/>
</dbReference>
<dbReference type="FunFam" id="3.40.1510.10:FF:000001">
    <property type="entry name" value="Hut operon positive regulatory protein"/>
    <property type="match status" value="1"/>
</dbReference>
<dbReference type="Gene3D" id="3.40.1510.10">
    <property type="entry name" value="Hut operon regulatory protein HutP"/>
    <property type="match status" value="1"/>
</dbReference>
<dbReference type="HAMAP" id="MF_00779">
    <property type="entry name" value="HutP"/>
    <property type="match status" value="1"/>
</dbReference>
<dbReference type="InterPro" id="IPR015111">
    <property type="entry name" value="Regulatory_HutP"/>
</dbReference>
<dbReference type="InterPro" id="IPR023552">
    <property type="entry name" value="Regulatory_HutP_bacillales"/>
</dbReference>
<dbReference type="InterPro" id="IPR036482">
    <property type="entry name" value="Regulatory_HutP_sf"/>
</dbReference>
<dbReference type="NCBIfam" id="NF002838">
    <property type="entry name" value="PRK03065.1"/>
    <property type="match status" value="1"/>
</dbReference>
<dbReference type="Pfam" id="PF09021">
    <property type="entry name" value="HutP"/>
    <property type="match status" value="1"/>
</dbReference>
<dbReference type="SUPFAM" id="SSF111064">
    <property type="entry name" value="Hut operon positive regulatory protein HutP"/>
    <property type="match status" value="1"/>
</dbReference>
<feature type="chain" id="PRO_1000133710" description="Hut operon positive regulatory protein">
    <location>
        <begin position="1"/>
        <end position="146"/>
    </location>
</feature>
<gene>
    <name evidence="1" type="primary">hutP</name>
    <name type="ordered locus">BCAH187_A3686</name>
</gene>
<comment type="function">
    <text evidence="1">Antiterminator that binds to cis-acting regulatory sequences on the mRNA in the presence of histidine, thereby suppressing transcription termination and activating the hut operon for histidine utilization.</text>
</comment>
<comment type="subunit">
    <text evidence="1">Homohexamer.</text>
</comment>
<comment type="similarity">
    <text evidence="1">Belongs to the HutP family.</text>
</comment>
<name>HUTP_BACC7</name>
<evidence type="ECO:0000255" key="1">
    <source>
        <dbReference type="HAMAP-Rule" id="MF_00779"/>
    </source>
</evidence>
<organism>
    <name type="scientific">Bacillus cereus (strain AH187)</name>
    <dbReference type="NCBI Taxonomy" id="405534"/>
    <lineage>
        <taxon>Bacteria</taxon>
        <taxon>Bacillati</taxon>
        <taxon>Bacillota</taxon>
        <taxon>Bacilli</taxon>
        <taxon>Bacillales</taxon>
        <taxon>Bacillaceae</taxon>
        <taxon>Bacillus</taxon>
        <taxon>Bacillus cereus group</taxon>
    </lineage>
</organism>
<reference key="1">
    <citation type="submission" date="2008-10" db="EMBL/GenBank/DDBJ databases">
        <title>Genome sequence of Bacillus cereus AH187.</title>
        <authorList>
            <person name="Dodson R.J."/>
            <person name="Durkin A.S."/>
            <person name="Rosovitz M.J."/>
            <person name="Rasko D.A."/>
            <person name="Kolsto A.B."/>
            <person name="Okstad O.A."/>
            <person name="Ravel J."/>
            <person name="Sutton G."/>
        </authorList>
    </citation>
    <scope>NUCLEOTIDE SEQUENCE [LARGE SCALE GENOMIC DNA]</scope>
    <source>
        <strain>AH187</strain>
    </source>
</reference>